<feature type="chain" id="PRO_1000066799" description="Cyclic pyranopterin monophosphate synthase">
    <location>
        <begin position="1"/>
        <end position="161"/>
    </location>
</feature>
<feature type="active site" evidence="1">
    <location>
        <position position="128"/>
    </location>
</feature>
<feature type="binding site" evidence="1">
    <location>
        <begin position="75"/>
        <end position="77"/>
    </location>
    <ligand>
        <name>substrate</name>
    </ligand>
</feature>
<feature type="binding site" evidence="1">
    <location>
        <begin position="113"/>
        <end position="114"/>
    </location>
    <ligand>
        <name>substrate</name>
    </ligand>
</feature>
<evidence type="ECO:0000255" key="1">
    <source>
        <dbReference type="HAMAP-Rule" id="MF_01224"/>
    </source>
</evidence>
<reference key="1">
    <citation type="journal article" date="2008" name="J. Bacteriol.">
        <title>The pangenome structure of Escherichia coli: comparative genomic analysis of E. coli commensal and pathogenic isolates.</title>
        <authorList>
            <person name="Rasko D.A."/>
            <person name="Rosovitz M.J."/>
            <person name="Myers G.S.A."/>
            <person name="Mongodin E.F."/>
            <person name="Fricke W.F."/>
            <person name="Gajer P."/>
            <person name="Crabtree J."/>
            <person name="Sebaihia M."/>
            <person name="Thomson N.R."/>
            <person name="Chaudhuri R."/>
            <person name="Henderson I.R."/>
            <person name="Sperandio V."/>
            <person name="Ravel J."/>
        </authorList>
    </citation>
    <scope>NUCLEOTIDE SEQUENCE [LARGE SCALE GENOMIC DNA]</scope>
    <source>
        <strain>HS</strain>
    </source>
</reference>
<gene>
    <name evidence="1" type="primary">moaC</name>
    <name type="ordered locus">EcHS_A0837</name>
</gene>
<protein>
    <recommendedName>
        <fullName evidence="1">Cyclic pyranopterin monophosphate synthase</fullName>
        <ecNumber evidence="1">4.6.1.17</ecNumber>
    </recommendedName>
    <alternativeName>
        <fullName evidence="1">Molybdenum cofactor biosynthesis protein C</fullName>
    </alternativeName>
</protein>
<name>MOAC_ECOHS</name>
<keyword id="KW-0456">Lyase</keyword>
<keyword id="KW-0501">Molybdenum cofactor biosynthesis</keyword>
<sequence length="161" mass="17457">MSQLTHINAAGEAHMVDVSAKAETVREARAEAFVTMRSETLAMIIDGRHHKGDVFATARIAGIQAAKRTWDLIPLCHPLMLSKVEVNLQAEPEHNRVRIETLCRLTGKTGVEMEALTAASVAALTIYDMCKAVQKDMVIGSVRLLAKSGGKSGDFKVEADD</sequence>
<accession>A7ZY39</accession>
<organism>
    <name type="scientific">Escherichia coli O9:H4 (strain HS)</name>
    <dbReference type="NCBI Taxonomy" id="331112"/>
    <lineage>
        <taxon>Bacteria</taxon>
        <taxon>Pseudomonadati</taxon>
        <taxon>Pseudomonadota</taxon>
        <taxon>Gammaproteobacteria</taxon>
        <taxon>Enterobacterales</taxon>
        <taxon>Enterobacteriaceae</taxon>
        <taxon>Escherichia</taxon>
    </lineage>
</organism>
<comment type="function">
    <text evidence="1">Catalyzes the conversion of (8S)-3',8-cyclo-7,8-dihydroguanosine 5'-triphosphate to cyclic pyranopterin monophosphate (cPMP).</text>
</comment>
<comment type="catalytic activity">
    <reaction evidence="1">
        <text>(8S)-3',8-cyclo-7,8-dihydroguanosine 5'-triphosphate = cyclic pyranopterin phosphate + diphosphate</text>
        <dbReference type="Rhea" id="RHEA:49580"/>
        <dbReference type="ChEBI" id="CHEBI:33019"/>
        <dbReference type="ChEBI" id="CHEBI:59648"/>
        <dbReference type="ChEBI" id="CHEBI:131766"/>
        <dbReference type="EC" id="4.6.1.17"/>
    </reaction>
</comment>
<comment type="pathway">
    <text evidence="1">Cofactor biosynthesis; molybdopterin biosynthesis.</text>
</comment>
<comment type="subunit">
    <text evidence="1">Homohexamer; trimer of dimers.</text>
</comment>
<comment type="similarity">
    <text evidence="1">Belongs to the MoaC family.</text>
</comment>
<dbReference type="EC" id="4.6.1.17" evidence="1"/>
<dbReference type="EMBL" id="CP000802">
    <property type="protein sequence ID" value="ABV05193.1"/>
    <property type="molecule type" value="Genomic_DNA"/>
</dbReference>
<dbReference type="RefSeq" id="WP_000080888.1">
    <property type="nucleotide sequence ID" value="NC_009800.1"/>
</dbReference>
<dbReference type="SMR" id="A7ZY39"/>
<dbReference type="KEGG" id="ecx:EcHS_A0837"/>
<dbReference type="HOGENOM" id="CLU_074693_1_1_6"/>
<dbReference type="UniPathway" id="UPA00344"/>
<dbReference type="GO" id="GO:0061799">
    <property type="term" value="F:cyclic pyranopterin monophosphate synthase activity"/>
    <property type="evidence" value="ECO:0007669"/>
    <property type="project" value="UniProtKB-UniRule"/>
</dbReference>
<dbReference type="GO" id="GO:0006777">
    <property type="term" value="P:Mo-molybdopterin cofactor biosynthetic process"/>
    <property type="evidence" value="ECO:0007669"/>
    <property type="project" value="UniProtKB-UniRule"/>
</dbReference>
<dbReference type="CDD" id="cd01420">
    <property type="entry name" value="MoaC_PE"/>
    <property type="match status" value="1"/>
</dbReference>
<dbReference type="FunFam" id="3.30.70.640:FF:000001">
    <property type="entry name" value="Cyclic pyranopterin monophosphate synthase"/>
    <property type="match status" value="1"/>
</dbReference>
<dbReference type="Gene3D" id="3.30.70.640">
    <property type="entry name" value="Molybdopterin cofactor biosynthesis C (MoaC) domain"/>
    <property type="match status" value="1"/>
</dbReference>
<dbReference type="HAMAP" id="MF_01224_B">
    <property type="entry name" value="MoaC_B"/>
    <property type="match status" value="1"/>
</dbReference>
<dbReference type="InterPro" id="IPR023045">
    <property type="entry name" value="MoaC"/>
</dbReference>
<dbReference type="InterPro" id="IPR047594">
    <property type="entry name" value="MoaC_bact/euk"/>
</dbReference>
<dbReference type="InterPro" id="IPR036522">
    <property type="entry name" value="MoaC_sf"/>
</dbReference>
<dbReference type="InterPro" id="IPR050105">
    <property type="entry name" value="MoCo_biosynth_MoaA/MoaC"/>
</dbReference>
<dbReference type="InterPro" id="IPR002820">
    <property type="entry name" value="Mopterin_CF_biosynth-C_dom"/>
</dbReference>
<dbReference type="NCBIfam" id="TIGR00581">
    <property type="entry name" value="moaC"/>
    <property type="match status" value="1"/>
</dbReference>
<dbReference type="NCBIfam" id="NF006870">
    <property type="entry name" value="PRK09364.1"/>
    <property type="match status" value="1"/>
</dbReference>
<dbReference type="PANTHER" id="PTHR22960">
    <property type="entry name" value="MOLYBDOPTERIN COFACTOR SYNTHESIS PROTEIN A"/>
    <property type="match status" value="1"/>
</dbReference>
<dbReference type="Pfam" id="PF01967">
    <property type="entry name" value="MoaC"/>
    <property type="match status" value="1"/>
</dbReference>
<dbReference type="SUPFAM" id="SSF55040">
    <property type="entry name" value="Molybdenum cofactor biosynthesis protein C, MoaC"/>
    <property type="match status" value="1"/>
</dbReference>
<proteinExistence type="inferred from homology"/>